<proteinExistence type="evidence at transcript level"/>
<comment type="function">
    <text evidence="1">Involved in the 3'-end formation of mRNA precursors (pre-mRNA) by the addition of a poly(A) tail of 200-250 nt to the upstream cleavage product. Stimulates poly(A) polymerase (PAPOLA) conferring processivity on the poly(A) tail elongation reaction and also controls the poly(A) tail length. Increases the affinity of poly(A) polymerase for RNA. Binds to poly(A) and to poly(G) with high affinity. May protect the poly(A) tail from degradation.</text>
</comment>
<comment type="subunit">
    <text evidence="2">Monomer and homooligomer. Binds RNA as a monomer and oligomerizes when bound to poly(A) (By similarity).</text>
</comment>
<comment type="subcellular location">
    <subcellularLocation>
        <location evidence="3">Nucleus</location>
    </subcellularLocation>
    <subcellularLocation>
        <location evidence="2">Cytoplasm</location>
    </subcellularLocation>
    <text evidence="2">Shuttles between the nucleus and the cytoplasm but predominantly found in the nucleus.</text>
</comment>
<comment type="domain">
    <text evidence="1">The RRM domain is essential for specific adenine bases recognition in the poly(A) tail but not sufficient for poly(A) binding.</text>
</comment>
<accession>Q7ZXB8</accession>
<feature type="chain" id="PRO_0000252083" description="Polyadenylate-binding protein 2-B">
    <location>
        <begin position="1"/>
        <end position="295"/>
    </location>
</feature>
<feature type="domain" description="RRM" evidence="5">
    <location>
        <begin position="162"/>
        <end position="239"/>
    </location>
</feature>
<feature type="region of interest" description="Disordered" evidence="6">
    <location>
        <begin position="1"/>
        <end position="102"/>
    </location>
</feature>
<feature type="region of interest" description="Necessary for homooligomerization" evidence="2">
    <location>
        <begin position="145"/>
        <end position="295"/>
    </location>
</feature>
<feature type="coiled-coil region" evidence="4">
    <location>
        <begin position="106"/>
        <end position="140"/>
    </location>
</feature>
<feature type="compositionally biased region" description="Gly residues" evidence="6">
    <location>
        <begin position="19"/>
        <end position="31"/>
    </location>
</feature>
<feature type="compositionally biased region" description="Gly residues" evidence="6">
    <location>
        <begin position="71"/>
        <end position="81"/>
    </location>
</feature>
<feature type="compositionally biased region" description="Acidic residues" evidence="6">
    <location>
        <begin position="83"/>
        <end position="96"/>
    </location>
</feature>
<protein>
    <recommendedName>
        <fullName>Polyadenylate-binding protein 2-B</fullName>
        <shortName>PABP-2-B</shortName>
        <shortName>Poly(A)-binding protein 2-B</shortName>
    </recommendedName>
    <alternativeName>
        <fullName>Nuclear poly(A)-binding protein 1-B</fullName>
    </alternativeName>
    <alternativeName>
        <fullName>Poly(A)-binding protein II-B</fullName>
        <shortName>PABII-B</shortName>
    </alternativeName>
    <alternativeName>
        <fullName>Polyadenylate-binding nuclear protein 1-B</fullName>
    </alternativeName>
    <alternativeName>
        <fullName>XLnPABP2-B</fullName>
    </alternativeName>
    <alternativeName>
        <fullName>nPABP2-B</fullName>
    </alternativeName>
    <alternativeName>
        <fullName>xPABPII-B</fullName>
    </alternativeName>
</protein>
<evidence type="ECO:0000250" key="1">
    <source>
        <dbReference type="UniProtKB" id="Q28165"/>
    </source>
</evidence>
<evidence type="ECO:0000250" key="2">
    <source>
        <dbReference type="UniProtKB" id="Q86U42"/>
    </source>
</evidence>
<evidence type="ECO:0000250" key="3">
    <source>
        <dbReference type="UniProtKB" id="Q9DDY9"/>
    </source>
</evidence>
<evidence type="ECO:0000255" key="4"/>
<evidence type="ECO:0000255" key="5">
    <source>
        <dbReference type="PROSITE-ProRule" id="PRU00176"/>
    </source>
</evidence>
<evidence type="ECO:0000256" key="6">
    <source>
        <dbReference type="SAM" id="MobiDB-lite"/>
    </source>
</evidence>
<evidence type="ECO:0000312" key="7">
    <source>
        <dbReference type="EMBL" id="AAH45063.1"/>
    </source>
</evidence>
<dbReference type="EMBL" id="BC045063">
    <property type="protein sequence ID" value="AAH45063.1"/>
    <property type="molecule type" value="mRNA"/>
</dbReference>
<dbReference type="RefSeq" id="NP_001080719.1">
    <property type="nucleotide sequence ID" value="NM_001087250.1"/>
</dbReference>
<dbReference type="SMR" id="Q7ZXB8"/>
<dbReference type="DNASU" id="380411"/>
<dbReference type="GeneID" id="380411"/>
<dbReference type="KEGG" id="xla:380411"/>
<dbReference type="AGR" id="Xenbase:XB-GENE-1007055"/>
<dbReference type="CTD" id="380411"/>
<dbReference type="Xenbase" id="XB-GENE-1007055">
    <property type="gene designation" value="pabpn1.L"/>
</dbReference>
<dbReference type="OrthoDB" id="4726at2759"/>
<dbReference type="Proteomes" id="UP000186698">
    <property type="component" value="Chromosome 1L"/>
</dbReference>
<dbReference type="Bgee" id="380411">
    <property type="expression patterns" value="Expressed in neurula embryo and 19 other cell types or tissues"/>
</dbReference>
<dbReference type="GO" id="GO:0005737">
    <property type="term" value="C:cytoplasm"/>
    <property type="evidence" value="ECO:0000250"/>
    <property type="project" value="UniProtKB"/>
</dbReference>
<dbReference type="GO" id="GO:0042405">
    <property type="term" value="C:nuclear inclusion body"/>
    <property type="evidence" value="ECO:0000250"/>
    <property type="project" value="UniProtKB"/>
</dbReference>
<dbReference type="GO" id="GO:0005634">
    <property type="term" value="C:nucleus"/>
    <property type="evidence" value="ECO:0000250"/>
    <property type="project" value="UniProtKB"/>
</dbReference>
<dbReference type="GO" id="GO:1990904">
    <property type="term" value="C:ribonucleoprotein complex"/>
    <property type="evidence" value="ECO:0000250"/>
    <property type="project" value="UniProtKB"/>
</dbReference>
<dbReference type="GO" id="GO:0008143">
    <property type="term" value="F:poly(A) binding"/>
    <property type="evidence" value="ECO:0000250"/>
    <property type="project" value="UniProtKB"/>
</dbReference>
<dbReference type="GO" id="GO:0003723">
    <property type="term" value="F:RNA binding"/>
    <property type="evidence" value="ECO:0000250"/>
    <property type="project" value="UniProtKB"/>
</dbReference>
<dbReference type="GO" id="GO:0070063">
    <property type="term" value="F:RNA polymerase binding"/>
    <property type="evidence" value="ECO:0000250"/>
    <property type="project" value="UniProtKB"/>
</dbReference>
<dbReference type="GO" id="GO:0071222">
    <property type="term" value="P:cellular response to lipopolysaccharide"/>
    <property type="evidence" value="ECO:0000250"/>
    <property type="project" value="UniProtKB"/>
</dbReference>
<dbReference type="GO" id="GO:0000165">
    <property type="term" value="P:MAPK cascade"/>
    <property type="evidence" value="ECO:0000250"/>
    <property type="project" value="UniProtKB"/>
</dbReference>
<dbReference type="GO" id="GO:0031124">
    <property type="term" value="P:mRNA 3'-end processing"/>
    <property type="evidence" value="ECO:0000250"/>
    <property type="project" value="UniProtKB"/>
</dbReference>
<dbReference type="GO" id="GO:1904247">
    <property type="term" value="P:positive regulation of polynucleotide adenylyltransferase activity"/>
    <property type="evidence" value="ECO:0000250"/>
    <property type="project" value="UniProtKB"/>
</dbReference>
<dbReference type="CDD" id="cd12550">
    <property type="entry name" value="RRM_II_PABPN1"/>
    <property type="match status" value="1"/>
</dbReference>
<dbReference type="FunFam" id="3.30.70.330:FF:000311">
    <property type="entry name" value="polyadenylate-binding protein 2"/>
    <property type="match status" value="1"/>
</dbReference>
<dbReference type="Gene3D" id="3.30.70.330">
    <property type="match status" value="1"/>
</dbReference>
<dbReference type="InterPro" id="IPR012677">
    <property type="entry name" value="Nucleotide-bd_a/b_plait_sf"/>
</dbReference>
<dbReference type="InterPro" id="IPR035979">
    <property type="entry name" value="RBD_domain_sf"/>
</dbReference>
<dbReference type="InterPro" id="IPR000504">
    <property type="entry name" value="RRM_dom"/>
</dbReference>
<dbReference type="PANTHER" id="PTHR23236">
    <property type="entry name" value="EUKARYOTIC TRANSLATION INITIATION FACTOR 4B/4H"/>
    <property type="match status" value="1"/>
</dbReference>
<dbReference type="PANTHER" id="PTHR23236:SF16">
    <property type="entry name" value="POLYADENYLATE-BINDING PROTEIN 2"/>
    <property type="match status" value="1"/>
</dbReference>
<dbReference type="Pfam" id="PF00076">
    <property type="entry name" value="RRM_1"/>
    <property type="match status" value="1"/>
</dbReference>
<dbReference type="SMART" id="SM00360">
    <property type="entry name" value="RRM"/>
    <property type="match status" value="1"/>
</dbReference>
<dbReference type="SUPFAM" id="SSF54928">
    <property type="entry name" value="RNA-binding domain, RBD"/>
    <property type="match status" value="1"/>
</dbReference>
<dbReference type="PROSITE" id="PS50102">
    <property type="entry name" value="RRM"/>
    <property type="match status" value="1"/>
</dbReference>
<name>PAB2B_XENLA</name>
<organism>
    <name type="scientific">Xenopus laevis</name>
    <name type="common">African clawed frog</name>
    <dbReference type="NCBI Taxonomy" id="8355"/>
    <lineage>
        <taxon>Eukaryota</taxon>
        <taxon>Metazoa</taxon>
        <taxon>Chordata</taxon>
        <taxon>Craniata</taxon>
        <taxon>Vertebrata</taxon>
        <taxon>Euteleostomi</taxon>
        <taxon>Amphibia</taxon>
        <taxon>Batrachia</taxon>
        <taxon>Anura</taxon>
        <taxon>Pipoidea</taxon>
        <taxon>Pipidae</taxon>
        <taxon>Xenopodinae</taxon>
        <taxon>Xenopus</taxon>
        <taxon>Xenopus</taxon>
    </lineage>
</organism>
<keyword id="KW-0175">Coiled coil</keyword>
<keyword id="KW-0963">Cytoplasm</keyword>
<keyword id="KW-0507">mRNA processing</keyword>
<keyword id="KW-0539">Nucleus</keyword>
<keyword id="KW-1185">Reference proteome</keyword>
<keyword id="KW-0694">RNA-binding</keyword>
<gene>
    <name type="primary">pabpn1-b</name>
</gene>
<reference evidence="7" key="1">
    <citation type="submission" date="2003-01" db="EMBL/GenBank/DDBJ databases">
        <authorList>
            <consortium name="NIH - Xenopus Gene Collection (XGC) project"/>
        </authorList>
    </citation>
    <scope>NUCLEOTIDE SEQUENCE [LARGE SCALE MRNA]</scope>
    <source>
        <tissue evidence="7">Embryo</tissue>
    </source>
</reference>
<sequence>MAAVSSVASLRGADYENGLRGGAGPSGGGQDPGEDDPMGRGTLDLDLELLTQGRRNRRVGGRTAPGRRSGGRGGSGGGAGGLEELEDEELEEEEPGELTGDQTIEDPELEAIKARVREMEEEAEKLKELQNEVEKQMNMSPPPGNAGPVIMSVEEKMEADARSIYVGNVDYGATAEELEAHFHGCGSVNRVTILCDKFTGHPKGFAYIEFSDKESVRTSLALDESLFRGRQIKVVPKRTNRPGISTTDRGFPRARYRARASSYSSRSRFYSGYTPRPRGRVYRGRARATSWYTPY</sequence>